<name>H2B_YARLI</name>
<gene>
    <name type="primary">HTB1</name>
    <name type="ordered locus">YALI0E26455g</name>
</gene>
<evidence type="ECO:0000250" key="1"/>
<evidence type="ECO:0000256" key="2">
    <source>
        <dbReference type="SAM" id="MobiDB-lite"/>
    </source>
</evidence>
<evidence type="ECO:0000305" key="3"/>
<reference key="1">
    <citation type="journal article" date="2004" name="Nature">
        <title>Genome evolution in yeasts.</title>
        <authorList>
            <person name="Dujon B."/>
            <person name="Sherman D."/>
            <person name="Fischer G."/>
            <person name="Durrens P."/>
            <person name="Casaregola S."/>
            <person name="Lafontaine I."/>
            <person name="de Montigny J."/>
            <person name="Marck C."/>
            <person name="Neuveglise C."/>
            <person name="Talla E."/>
            <person name="Goffard N."/>
            <person name="Frangeul L."/>
            <person name="Aigle M."/>
            <person name="Anthouard V."/>
            <person name="Babour A."/>
            <person name="Barbe V."/>
            <person name="Barnay S."/>
            <person name="Blanchin S."/>
            <person name="Beckerich J.-M."/>
            <person name="Beyne E."/>
            <person name="Bleykasten C."/>
            <person name="Boisrame A."/>
            <person name="Boyer J."/>
            <person name="Cattolico L."/>
            <person name="Confanioleri F."/>
            <person name="de Daruvar A."/>
            <person name="Despons L."/>
            <person name="Fabre E."/>
            <person name="Fairhead C."/>
            <person name="Ferry-Dumazet H."/>
            <person name="Groppi A."/>
            <person name="Hantraye F."/>
            <person name="Hennequin C."/>
            <person name="Jauniaux N."/>
            <person name="Joyet P."/>
            <person name="Kachouri R."/>
            <person name="Kerrest A."/>
            <person name="Koszul R."/>
            <person name="Lemaire M."/>
            <person name="Lesur I."/>
            <person name="Ma L."/>
            <person name="Muller H."/>
            <person name="Nicaud J.-M."/>
            <person name="Nikolski M."/>
            <person name="Oztas S."/>
            <person name="Ozier-Kalogeropoulos O."/>
            <person name="Pellenz S."/>
            <person name="Potier S."/>
            <person name="Richard G.-F."/>
            <person name="Straub M.-L."/>
            <person name="Suleau A."/>
            <person name="Swennen D."/>
            <person name="Tekaia F."/>
            <person name="Wesolowski-Louvel M."/>
            <person name="Westhof E."/>
            <person name="Wirth B."/>
            <person name="Zeniou-Meyer M."/>
            <person name="Zivanovic Y."/>
            <person name="Bolotin-Fukuhara M."/>
            <person name="Thierry A."/>
            <person name="Bouchier C."/>
            <person name="Caudron B."/>
            <person name="Scarpelli C."/>
            <person name="Gaillardin C."/>
            <person name="Weissenbach J."/>
            <person name="Wincker P."/>
            <person name="Souciet J.-L."/>
        </authorList>
    </citation>
    <scope>NUCLEOTIDE SEQUENCE [LARGE SCALE GENOMIC DNA]</scope>
    <source>
        <strain>CLIB 122 / E 150</strain>
    </source>
</reference>
<organism>
    <name type="scientific">Yarrowia lipolytica (strain CLIB 122 / E 150)</name>
    <name type="common">Yeast</name>
    <name type="synonym">Candida lipolytica</name>
    <dbReference type="NCBI Taxonomy" id="284591"/>
    <lineage>
        <taxon>Eukaryota</taxon>
        <taxon>Fungi</taxon>
        <taxon>Dikarya</taxon>
        <taxon>Ascomycota</taxon>
        <taxon>Saccharomycotina</taxon>
        <taxon>Dipodascomycetes</taxon>
        <taxon>Dipodascales</taxon>
        <taxon>Dipodascales incertae sedis</taxon>
        <taxon>Yarrowia</taxon>
    </lineage>
</organism>
<dbReference type="EMBL" id="CR382131">
    <property type="protein sequence ID" value="CAG80026.1"/>
    <property type="molecule type" value="Genomic_DNA"/>
</dbReference>
<dbReference type="RefSeq" id="XP_504425.1">
    <property type="nucleotide sequence ID" value="XM_504425.1"/>
</dbReference>
<dbReference type="SMR" id="Q6C4I7"/>
<dbReference type="FunCoup" id="Q6C4I7">
    <property type="interactions" value="1085"/>
</dbReference>
<dbReference type="STRING" id="284591.Q6C4I7"/>
<dbReference type="EnsemblFungi" id="CAG80026">
    <property type="protein sequence ID" value="CAG80026"/>
    <property type="gene ID" value="YALI0_E26455g"/>
</dbReference>
<dbReference type="KEGG" id="yli:2912377"/>
<dbReference type="VEuPathDB" id="FungiDB:YALI0_E26455g"/>
<dbReference type="HOGENOM" id="CLU_075666_1_3_1"/>
<dbReference type="InParanoid" id="Q6C4I7"/>
<dbReference type="OMA" id="FCPFAIR"/>
<dbReference type="OrthoDB" id="115602at4891"/>
<dbReference type="Proteomes" id="UP000001300">
    <property type="component" value="Chromosome E"/>
</dbReference>
<dbReference type="GO" id="GO:0000786">
    <property type="term" value="C:nucleosome"/>
    <property type="evidence" value="ECO:0007669"/>
    <property type="project" value="UniProtKB-KW"/>
</dbReference>
<dbReference type="GO" id="GO:0005634">
    <property type="term" value="C:nucleus"/>
    <property type="evidence" value="ECO:0007669"/>
    <property type="project" value="UniProtKB-SubCell"/>
</dbReference>
<dbReference type="GO" id="GO:0035861">
    <property type="term" value="C:site of double-strand break"/>
    <property type="evidence" value="ECO:0007669"/>
    <property type="project" value="EnsemblFungi"/>
</dbReference>
<dbReference type="GO" id="GO:0003677">
    <property type="term" value="F:DNA binding"/>
    <property type="evidence" value="ECO:0000318"/>
    <property type="project" value="GO_Central"/>
</dbReference>
<dbReference type="GO" id="GO:0046982">
    <property type="term" value="F:protein heterodimerization activity"/>
    <property type="evidence" value="ECO:0007669"/>
    <property type="project" value="InterPro"/>
</dbReference>
<dbReference type="GO" id="GO:0030527">
    <property type="term" value="F:structural constituent of chromatin"/>
    <property type="evidence" value="ECO:0007669"/>
    <property type="project" value="InterPro"/>
</dbReference>
<dbReference type="CDD" id="cd22910">
    <property type="entry name" value="HFD_H2B"/>
    <property type="match status" value="1"/>
</dbReference>
<dbReference type="FunFam" id="1.10.20.10:FF:000014">
    <property type="entry name" value="Histone H2B"/>
    <property type="match status" value="1"/>
</dbReference>
<dbReference type="Gene3D" id="1.10.20.10">
    <property type="entry name" value="Histone, subunit A"/>
    <property type="match status" value="1"/>
</dbReference>
<dbReference type="InterPro" id="IPR009072">
    <property type="entry name" value="Histone-fold"/>
</dbReference>
<dbReference type="InterPro" id="IPR007125">
    <property type="entry name" value="Histone_H2A/H2B/H3"/>
</dbReference>
<dbReference type="InterPro" id="IPR000558">
    <property type="entry name" value="Histone_H2B"/>
</dbReference>
<dbReference type="PANTHER" id="PTHR23428">
    <property type="entry name" value="HISTONE H2B"/>
    <property type="match status" value="1"/>
</dbReference>
<dbReference type="Pfam" id="PF00125">
    <property type="entry name" value="Histone"/>
    <property type="match status" value="1"/>
</dbReference>
<dbReference type="PRINTS" id="PR00621">
    <property type="entry name" value="HISTONEH2B"/>
</dbReference>
<dbReference type="SMART" id="SM00427">
    <property type="entry name" value="H2B"/>
    <property type="match status" value="1"/>
</dbReference>
<dbReference type="SUPFAM" id="SSF47113">
    <property type="entry name" value="Histone-fold"/>
    <property type="match status" value="1"/>
</dbReference>
<comment type="function">
    <text>Core component of nucleosome. Nucleosomes wrap and compact DNA into chromatin, limiting DNA accessibility to the cellular machineries which require DNA as a template. Histones thereby play a central role in transcription regulation, DNA repair, DNA replication and chromosomal stability. DNA accessibility is regulated via a complex set of post-translational modifications of histones, also called histone code, and nucleosome remodeling.</text>
</comment>
<comment type="subunit">
    <text>The nucleosome is a histone octamer containing two molecules each of H2A, H2B, H3 and H4 assembled in one H3-H4 heterotetramer and two H2A-H2B heterodimers. The octamer wraps approximately 147 bp of DNA.</text>
</comment>
<comment type="subcellular location">
    <subcellularLocation>
        <location evidence="1">Nucleus</location>
    </subcellularLocation>
    <subcellularLocation>
        <location evidence="1">Chromosome</location>
    </subcellularLocation>
</comment>
<comment type="PTM">
    <text evidence="1">Monoubiquitinated by the UBC2-BRE1 complex to form H2BK123ub1. H2BK123ub1 gives a specific tag for epigenetic transcriptional activation and is also prerequisite for H3K4me and H3K79me formation. H2BK123ub1 also modulates the formation of double-strand breaks during meiosis and is a prerequisite for DNA-damage checkpoint activation (By similarity).</text>
</comment>
<comment type="PTM">
    <text evidence="1">Acetylated by GCN5 to form H2BK11ac and H2BK16ac. H2BK16ac can also be formed by ESA1. Acetylation of N-terminal lysines and particularly formation of H2BK11acK16ac has a positive effect on transcription (By similarity).</text>
</comment>
<comment type="PTM">
    <text evidence="1">Sumoylation to form H2BK6su or H2BK7su, and probably also H2BK16su or H2BK17su, occurs preferentially near the telomeres and represses gene transcription.</text>
</comment>
<comment type="similarity">
    <text evidence="3">Belongs to the histone H2B family.</text>
</comment>
<comment type="caution">
    <text evidence="3">To ensure consistency between histone entries, we follow the 'Brno' nomenclature for histone modifications, with positions referring to those used in the literature for the 'closest' model organism. Due to slight variations in histone sequences between organisms and to the presence of initiator methionine in UniProtKB/Swiss-Prot sequences, the actual positions of modified amino acids in the sequence generally differ. In this entry the following conventions are used: H2BK6ac = acetylated Lys-8; H2BK6su = sumoylated Lys-8; H2BK7ac = acetylated Lys-9; H2BK7su = sumoylated Lys-9; H2BK11ac = acetylated Lys-15; H2BK16ac = acetylated Lys-25; H2BK16su = sumoylated Lys-25; H2BK17su = sumoylated Lys-26; H2BK123ub1 = monoubiquitinated Lys-133.</text>
</comment>
<protein>
    <recommendedName>
        <fullName>Histone H2B</fullName>
    </recommendedName>
</protein>
<sequence>MAPKVAEKKPSLAGKAPAGKAPAEKKEAGKKTTTATGEKKKRTKARKETYSSYIYKVLKQTHPDTGISTRAMSIMNSFVNDIFERVATEASKLATYTKKSTITSREIQTAVRLILPGELAKHATGDGTRAVAKYSTFDN</sequence>
<feature type="initiator methionine" description="Removed" evidence="1">
    <location>
        <position position="1"/>
    </location>
</feature>
<feature type="chain" id="PRO_0000245459" description="Histone H2B">
    <location>
        <begin position="2"/>
        <end position="139"/>
    </location>
</feature>
<feature type="region of interest" description="Disordered" evidence="2">
    <location>
        <begin position="1"/>
        <end position="47"/>
    </location>
</feature>
<feature type="compositionally biased region" description="Basic and acidic residues" evidence="2">
    <location>
        <begin position="1"/>
        <end position="10"/>
    </location>
</feature>
<feature type="modified residue" description="N6-acetyllysine; alternate" evidence="1">
    <location>
        <position position="8"/>
    </location>
</feature>
<feature type="modified residue" description="N6-acetyllysine; alternate" evidence="1">
    <location>
        <position position="9"/>
    </location>
</feature>
<feature type="modified residue" description="N6-acetyllysine" evidence="1">
    <location>
        <position position="15"/>
    </location>
</feature>
<feature type="modified residue" description="N6-acetyllysine; alternate" evidence="1">
    <location>
        <position position="25"/>
    </location>
</feature>
<feature type="cross-link" description="Glycyl lysine isopeptide (Lys-Gly) (interchain with G-Cter in SUMO); alternate" evidence="1">
    <location>
        <position position="8"/>
    </location>
</feature>
<feature type="cross-link" description="Glycyl lysine isopeptide (Lys-Gly) (interchain with G-Cter in SUMO); alternate" evidence="1">
    <location>
        <position position="9"/>
    </location>
</feature>
<feature type="cross-link" description="Glycyl lysine isopeptide (Lys-Gly) (interchain with G-Cter in SUMO); alternate" evidence="1">
    <location>
        <position position="25"/>
    </location>
</feature>
<feature type="cross-link" description="Glycyl lysine isopeptide (Lys-Gly) (interchain with G-Cter in SUMO)" evidence="1">
    <location>
        <position position="26"/>
    </location>
</feature>
<feature type="cross-link" description="Glycyl lysine isopeptide (Lys-Gly) (interchain with G-Cter in ubiquitin)" evidence="1">
    <location>
        <position position="133"/>
    </location>
</feature>
<proteinExistence type="inferred from homology"/>
<keyword id="KW-0007">Acetylation</keyword>
<keyword id="KW-0158">Chromosome</keyword>
<keyword id="KW-0238">DNA-binding</keyword>
<keyword id="KW-1017">Isopeptide bond</keyword>
<keyword id="KW-0544">Nucleosome core</keyword>
<keyword id="KW-0539">Nucleus</keyword>
<keyword id="KW-1185">Reference proteome</keyword>
<keyword id="KW-0832">Ubl conjugation</keyword>
<accession>Q6C4I7</accession>